<accession>Q6NE58</accession>
<accession>V6F5J5</accession>
<keyword id="KW-0091">Biomineralization</keyword>
<keyword id="KW-1281">Magnetosome</keyword>
<keyword id="KW-0472">Membrane</keyword>
<keyword id="KW-1185">Reference proteome</keyword>
<keyword id="KW-0732">Signal</keyword>
<keyword id="KW-0812">Transmembrane</keyword>
<keyword id="KW-1133">Transmembrane helix</keyword>
<reference key="1">
    <citation type="journal article" date="2003" name="J. Bacteriol.">
        <title>Characterization of a spontaneous nonmagnetic mutant of Magnetospirillum gryphiswaldense reveals a large deletion comprising a putative magnetosome island.</title>
        <authorList>
            <person name="Schuebbe S."/>
            <person name="Kube M."/>
            <person name="Scheffel A."/>
            <person name="Wawer C."/>
            <person name="Heyen U."/>
            <person name="Meyerdierks A."/>
            <person name="Madkour M.H."/>
            <person name="Mayer F."/>
            <person name="Reinhardt R."/>
            <person name="Schueler D."/>
        </authorList>
    </citation>
    <scope>NUCLEOTIDE SEQUENCE [GENOMIC DNA]</scope>
    <scope>PROBABLE OPERON</scope>
    <scope>DISRUPTION PHENOTYPE</scope>
    <source>
        <strain>DSM 6361 / JCM 21280 / NBRC 15271 / MSR-1</strain>
    </source>
</reference>
<reference key="2">
    <citation type="journal article" date="2005" name="J. Bacteriol.">
        <title>A hypervariable 130-kilobase genomic region of Magnetospirillum gryphiswaldense comprises a magnetosome island which undergoes frequent rearrangements during stationary growth.</title>
        <authorList>
            <person name="Ullrich S."/>
            <person name="Kube M."/>
            <person name="Schuebbe S."/>
            <person name="Reinhardt R."/>
            <person name="Schueler D."/>
        </authorList>
    </citation>
    <scope>NUCLEOTIDE SEQUENCE [GENOMIC DNA]</scope>
    <source>
        <strain>DSM 6361 / JCM 21280 / NBRC 15271 / MSR-1</strain>
    </source>
</reference>
<reference key="3">
    <citation type="journal article" date="2007" name="J. Bacteriol.">
        <title>Comparative genome analysis of four magnetotactic bacteria reveals a complex set of group-specific genes implicated in magnetosome biomineralization and function.</title>
        <authorList>
            <person name="Richter M."/>
            <person name="Kube M."/>
            <person name="Bazylinski D.A."/>
            <person name="Lombardot T."/>
            <person name="Gloeckner F.O."/>
            <person name="Reinhardt R."/>
            <person name="Schueler D."/>
        </authorList>
    </citation>
    <scope>NUCLEOTIDE SEQUENCE [LARGE SCALE GENOMIC DNA]</scope>
    <source>
        <strain>DSM 6361 / JCM 21280 / NBRC 15271 / MSR-1</strain>
    </source>
</reference>
<reference key="4">
    <citation type="journal article" date="2014" name="Genome Announc.">
        <title>Complete genome sequence of Magnetospirillum gryphiswaldense MSR-1.</title>
        <authorList>
            <person name="Wang X."/>
            <person name="Wang Q."/>
            <person name="Zhang W."/>
            <person name="Wang Y."/>
            <person name="Li L."/>
            <person name="Wen T."/>
            <person name="Zhang T."/>
            <person name="Zhang Y."/>
            <person name="Xu J."/>
            <person name="Hu J."/>
            <person name="Li S."/>
            <person name="Liu L."/>
            <person name="Liu J."/>
            <person name="Jiang W."/>
            <person name="Tian J."/>
            <person name="Li Y."/>
            <person name="Schuler D."/>
            <person name="Wang L."/>
            <person name="Li J."/>
        </authorList>
    </citation>
    <scope>NUCLEOTIDE SEQUENCE [LARGE SCALE GENOMIC DNA]</scope>
    <source>
        <strain>DSM 6361 / JCM 21280 / NBRC 15271 / MSR-1</strain>
    </source>
</reference>
<reference key="5">
    <citation type="journal article" date="2011" name="PLoS ONE">
        <title>Functional analysis of the magnetosome island in Magnetospirillum gryphiswaldense: the mamAB operon is sufficient for magnetite biomineralization.</title>
        <authorList>
            <person name="Lohsse A."/>
            <person name="Ullrich S."/>
            <person name="Katzmann E."/>
            <person name="Borg S."/>
            <person name="Wanner G."/>
            <person name="Richter M."/>
            <person name="Voigt B."/>
            <person name="Schweder T."/>
            <person name="Schueler D."/>
        </authorList>
    </citation>
    <scope>MINIMAL MAGNETOSOME ISLAND</scope>
    <scope>PROBABLE OPERON</scope>
    <scope>DISRUPTION PHENOTYPE</scope>
    <source>
        <strain>DSM 6361 / JCM 21280 / NBRC 15271 / MSR-1</strain>
    </source>
</reference>
<reference key="6">
    <citation type="journal article" date="2014" name="J. Bacteriol.">
        <title>Genetic dissection of the mamAB and mms6 operons reveals a gene set essential for magnetosome biogenesis in Magnetospirillum gryphiswaldense.</title>
        <authorList>
            <person name="Lohsse A."/>
            <person name="Borg S."/>
            <person name="Raschdorf O."/>
            <person name="Kolinko I."/>
            <person name="Tompa E."/>
            <person name="Posfai M."/>
            <person name="Faivre D."/>
            <person name="Baumgartner J."/>
            <person name="Schueler D."/>
        </authorList>
    </citation>
    <scope>SEQUENCE REVISION TO N-TERMINUS</scope>
    <scope>DISRUPTION PHENOTYPE</scope>
    <source>
        <strain>DSM 6361 / JCM 21280 / NBRC 15271 / MSR-1</strain>
    </source>
</reference>
<reference key="7">
    <citation type="journal article" date="2016" name="PLoS Genet.">
        <title>Genetic and Ultrastructural Analysis Reveals the Key Players and Initial Steps of Bacterial Magnetosome Membrane Biogenesis.</title>
        <authorList>
            <person name="Raschdorf O."/>
            <person name="Forstner Y."/>
            <person name="Kolinko I."/>
            <person name="Uebe R."/>
            <person name="Plitzko J.M."/>
            <person name="Schueler D."/>
        </authorList>
    </citation>
    <scope>FUNCTION</scope>
    <scope>MINIMAL VESICLE FORMATION GENES</scope>
    <scope>SUBCELLULAR LOCATION</scope>
    <scope>DISRUPTION PHENOTYPE</scope>
    <scope>MUTAGENESIS OF 63-LYS--ARG-78; 63-LYS--LYS-68; 64-ARG-ARG-65; HIS-67; LYS-72 AND 77-LYS-ARG-78</scope>
    <source>
        <strain>DSM 6361 / JCM 21280 / NBRC 15271 / MSR-1</strain>
    </source>
</reference>
<gene>
    <name evidence="6" type="primary">mamL</name>
    <name type="ordered locus">MGMSRv2__2376</name>
    <name type="ORF">mgIa19</name>
    <name type="ORF">MGR_4094</name>
</gene>
<comment type="function">
    <text evidence="5">Involved in magnetite crystal maturation, but not in magnetosome vesicle tubulation or formation. One of 7 genes (mamLQBIEMO) able to induce magnetosome membrane biogenesis; coexpression of mamLQRBIEMO in a deletion of the 17 gene mamAB operon restores magnetosome vesicle formation but not magnetite biosynthesis.</text>
</comment>
<comment type="subcellular location">
    <subcellularLocation>
        <location evidence="11">Magnetosome membrane</location>
        <topology evidence="1">Single-pass membrane protein</topology>
    </subcellularLocation>
    <text evidence="5">Tagged protein forms chains, aligned patches but also unaligned patches in the cell; the chains and aligned patches are in the correct position to be magnetosomes.</text>
</comment>
<comment type="induction">
    <text evidence="8 9">Part of the probable 17 gene mamAB operon.</text>
</comment>
<comment type="disruption phenotype">
    <text evidence="2 3 4 5">No magnetic response, no magnetosomes, no iron crystals of any sort. MamC is mislocalized in a few punctate spots throughout the cell (PubMed:24816605). No magnetic response at 30 degrees Celsius, a weak response at lower temperature. At 30 degrees Celsius magnetosome vesicles are smaller, sometimes align in a chain with the filament, only a few have very small crystals. Other, possibly precursor magnetosome vesicles are visible. MamC and MamI mislocalized to 1 to a few patches in most cells (PubMed:27286560). Deletion of 3 consecutive genes (mamJ, mamK, mamL) leads to cells devoid of magnetosomes or a magnetic response (PubMed:22043287). Deletion of approximately 80 kb of DNA, including this operon, leads to cells that are non-magnetic, lack internal membrane systems, grow poorly, have reduced mobility and take-up and accumulate iron poorly (PubMed:13129949).</text>
</comment>
<comment type="miscellaneous">
    <text evidence="8">This bacteria makes up to 60 cubo-octahedral magnetosomes of about 45 nm in diameter which contain membrane-bound crystals of magnetite (Fe(3)O(4)).</text>
</comment>
<comment type="miscellaneous">
    <text evidence="3">Expression of just the minimal mamAB gene cluster (MGMSRv2__2365 to MGMSRv2__2381), including this gene, is sufficient to form a minimal magnetosome chain with small magnetite particles.</text>
</comment>
<comment type="similarity">
    <text evidence="7">Belongs to the magnetosome MamL family.</text>
</comment>
<comment type="sequence caution" evidence="10">
    <conflict type="erroneous initiation">
        <sequence resource="EMBL-CDS" id="CAE12035"/>
    </conflict>
    <text>Extended N-terminus.</text>
</comment>
<comment type="sequence caution" evidence="10">
    <conflict type="erroneous initiation">
        <sequence resource="EMBL-CDS" id="CAJ30119"/>
    </conflict>
    <text>Extended N-terminus.</text>
</comment>
<comment type="sequence caution" evidence="10">
    <conflict type="erroneous initiation">
        <sequence resource="EMBL-CDS" id="CAM78026"/>
    </conflict>
    <text>Extended N-terminus.</text>
</comment>
<name>MAML_MAGGM</name>
<evidence type="ECO:0000255" key="1"/>
<evidence type="ECO:0000269" key="2">
    <source>
    </source>
</evidence>
<evidence type="ECO:0000269" key="3">
    <source>
    </source>
</evidence>
<evidence type="ECO:0000269" key="4">
    <source>
    </source>
</evidence>
<evidence type="ECO:0000269" key="5">
    <source>
    </source>
</evidence>
<evidence type="ECO:0000303" key="6">
    <source>
    </source>
</evidence>
<evidence type="ECO:0000305" key="7"/>
<evidence type="ECO:0000305" key="8">
    <source>
    </source>
</evidence>
<evidence type="ECO:0000305" key="9">
    <source>
    </source>
</evidence>
<evidence type="ECO:0000305" key="10">
    <source>
    </source>
</evidence>
<evidence type="ECO:0000305" key="11">
    <source>
    </source>
</evidence>
<dbReference type="EMBL" id="BX571797">
    <property type="protein sequence ID" value="CAE12035.1"/>
    <property type="status" value="ALT_INIT"/>
    <property type="molecule type" value="Genomic_DNA"/>
</dbReference>
<dbReference type="EMBL" id="AM085146">
    <property type="protein sequence ID" value="CAJ30119.1"/>
    <property type="status" value="ALT_INIT"/>
    <property type="molecule type" value="Genomic_DNA"/>
</dbReference>
<dbReference type="EMBL" id="CU459003">
    <property type="protein sequence ID" value="CAM78026.1"/>
    <property type="status" value="ALT_INIT"/>
    <property type="molecule type" value="Genomic_DNA"/>
</dbReference>
<dbReference type="EMBL" id="HG794546">
    <property type="protein sequence ID" value="CDK99591.1"/>
    <property type="molecule type" value="Genomic_DNA"/>
</dbReference>
<dbReference type="SMR" id="Q6NE58"/>
<dbReference type="STRING" id="1430440.MGMSRv2__2376"/>
<dbReference type="KEGG" id="mgry:MSR1_03390"/>
<dbReference type="KEGG" id="mgy:MGMSRv2__2376"/>
<dbReference type="HOGENOM" id="CLU_2617815_0_0_5"/>
<dbReference type="OrthoDB" id="7359835at2"/>
<dbReference type="Proteomes" id="UP000018922">
    <property type="component" value="Chromosome I"/>
</dbReference>
<dbReference type="GO" id="GO:0110146">
    <property type="term" value="C:magnetosome membrane"/>
    <property type="evidence" value="ECO:0000314"/>
    <property type="project" value="UniProtKB"/>
</dbReference>
<dbReference type="NCBIfam" id="NF040988">
    <property type="entry name" value="MamL"/>
    <property type="match status" value="1"/>
</dbReference>
<sequence>MVRVIGSLVFGGLILLLASSNAHMVETRFGPLIMLAPHFVVLGITFFLGFAIGIVLVFANVMKRRKHKLPGKNIVIKR</sequence>
<organism>
    <name type="scientific">Magnetospirillum gryphiswaldense (strain DSM 6361 / JCM 21280 / NBRC 15271 / MSR-1)</name>
    <dbReference type="NCBI Taxonomy" id="431944"/>
    <lineage>
        <taxon>Bacteria</taxon>
        <taxon>Pseudomonadati</taxon>
        <taxon>Pseudomonadota</taxon>
        <taxon>Alphaproteobacteria</taxon>
        <taxon>Rhodospirillales</taxon>
        <taxon>Rhodospirillaceae</taxon>
        <taxon>Magnetospirillum</taxon>
    </lineage>
</organism>
<proteinExistence type="evidence at protein level"/>
<feature type="signal peptide" evidence="1">
    <location>
        <begin position="1"/>
        <end position="22"/>
    </location>
</feature>
<feature type="chain" id="PRO_0000447806" description="Magnetosome protein MamL">
    <location>
        <begin position="23"/>
        <end position="78"/>
    </location>
</feature>
<feature type="topological domain" description="Lumenal" evidence="7">
    <location>
        <begin position="23"/>
        <end position="38"/>
    </location>
</feature>
<feature type="transmembrane region" description="Helical" evidence="1">
    <location>
        <begin position="39"/>
        <end position="59"/>
    </location>
</feature>
<feature type="topological domain" description="Cytoplasmic" evidence="7">
    <location>
        <begin position="60"/>
        <end position="78"/>
    </location>
</feature>
<feature type="mutagenesis site" description="No magnetite crystals, wild-type protein localization." evidence="5">
    <original>KRRKHKLPGKNIVIKR</original>
    <variation>QQQQYQLPGQNIVIQQ</variation>
    <location>
        <begin position="63"/>
        <end position="78"/>
    </location>
</feature>
<feature type="mutagenesis site" description="Approximately wild-type magnetite crystals, wild-type protein localization." evidence="5">
    <original>KRRKHK</original>
    <variation>QRRQHQ</variation>
    <location>
        <begin position="63"/>
        <end position="68"/>
    </location>
</feature>
<feature type="mutagenesis site" description="Approximately wild-type magnetite crystals, wild-type protein localization." evidence="5">
    <original>RR</original>
    <variation>QQ</variation>
    <location>
        <begin position="64"/>
        <end position="65"/>
    </location>
</feature>
<feature type="mutagenesis site" description="Approximately wild-type magnetite crystals, wild-type protein localization." evidence="5">
    <original>H</original>
    <variation>Y</variation>
    <location>
        <position position="67"/>
    </location>
</feature>
<feature type="mutagenesis site" description="Slightly smaller magnetite crystals, wild-type protein localization." evidence="5">
    <original>K</original>
    <variation>Q</variation>
    <location>
        <position position="72"/>
    </location>
</feature>
<feature type="mutagenesis site" description="Fewer, slightly smaller magnetite crystals, wild-type protein localization." evidence="5">
    <original>KR</original>
    <variation>QQ</variation>
    <location>
        <begin position="77"/>
        <end position="78"/>
    </location>
</feature>
<protein>
    <recommendedName>
        <fullName evidence="7">Magnetosome protein MamL</fullName>
    </recommendedName>
</protein>